<sequence length="277" mass="29982">MDIALLIKAAIMGIVEGLTEFLPISSTGHLILAGALLGFDDDKAKVFDIAIQTGAIFAVILVYWQKIRSTLIALPNEKQAQQFALNVLVAFVPAVVLGLLFGKAIKAHLFTPVVVASAFIVGGFIILWAEKRQQRNPATIRIHDVESMSTMDALKVGLVQCLAMIPGTSRSGSTIIGGMLLGLSRKAATDFSFYLAIPTLIGAGAYSLFKDRALLSMADAPMFGVGLLFSFLSAWLCIRWLLRYIASHDFVPFAWYRIAFGIVVLATAWSGVVTWAE</sequence>
<feature type="chain" id="PRO_0000290743" description="Undecaprenyl-diphosphatase">
    <location>
        <begin position="1"/>
        <end position="277"/>
    </location>
</feature>
<feature type="transmembrane region" description="Helical" evidence="1">
    <location>
        <begin position="3"/>
        <end position="23"/>
    </location>
</feature>
<feature type="transmembrane region" description="Helical" evidence="1">
    <location>
        <begin position="44"/>
        <end position="64"/>
    </location>
</feature>
<feature type="transmembrane region" description="Helical" evidence="1">
    <location>
        <begin position="82"/>
        <end position="102"/>
    </location>
</feature>
<feature type="transmembrane region" description="Helical" evidence="1">
    <location>
        <begin position="109"/>
        <end position="129"/>
    </location>
</feature>
<feature type="transmembrane region" description="Helical" evidence="1">
    <location>
        <begin position="189"/>
        <end position="209"/>
    </location>
</feature>
<feature type="transmembrane region" description="Helical" evidence="1">
    <location>
        <begin position="218"/>
        <end position="238"/>
    </location>
</feature>
<feature type="transmembrane region" description="Helical" evidence="1">
    <location>
        <begin position="253"/>
        <end position="273"/>
    </location>
</feature>
<organism>
    <name type="scientific">Polaromonas naphthalenivorans (strain CJ2)</name>
    <dbReference type="NCBI Taxonomy" id="365044"/>
    <lineage>
        <taxon>Bacteria</taxon>
        <taxon>Pseudomonadati</taxon>
        <taxon>Pseudomonadota</taxon>
        <taxon>Betaproteobacteria</taxon>
        <taxon>Burkholderiales</taxon>
        <taxon>Comamonadaceae</taxon>
        <taxon>Polaromonas</taxon>
    </lineage>
</organism>
<evidence type="ECO:0000255" key="1">
    <source>
        <dbReference type="HAMAP-Rule" id="MF_01006"/>
    </source>
</evidence>
<accession>A1VLZ3</accession>
<protein>
    <recommendedName>
        <fullName evidence="1">Undecaprenyl-diphosphatase</fullName>
        <ecNumber evidence="1">3.6.1.27</ecNumber>
    </recommendedName>
    <alternativeName>
        <fullName evidence="1">Bacitracin resistance protein</fullName>
    </alternativeName>
    <alternativeName>
        <fullName evidence="1">Undecaprenyl pyrophosphate phosphatase</fullName>
    </alternativeName>
</protein>
<reference key="1">
    <citation type="journal article" date="2009" name="Environ. Microbiol.">
        <title>The genome of Polaromonas naphthalenivorans strain CJ2, isolated from coal tar-contaminated sediment, reveals physiological and metabolic versatility and evolution through extensive horizontal gene transfer.</title>
        <authorList>
            <person name="Yagi J.M."/>
            <person name="Sims D."/>
            <person name="Brettin T."/>
            <person name="Bruce D."/>
            <person name="Madsen E.L."/>
        </authorList>
    </citation>
    <scope>NUCLEOTIDE SEQUENCE [LARGE SCALE GENOMIC DNA]</scope>
    <source>
        <strain>CJ2</strain>
    </source>
</reference>
<dbReference type="EC" id="3.6.1.27" evidence="1"/>
<dbReference type="EMBL" id="CP000529">
    <property type="protein sequence ID" value="ABM36671.1"/>
    <property type="molecule type" value="Genomic_DNA"/>
</dbReference>
<dbReference type="RefSeq" id="WP_011800762.1">
    <property type="nucleotide sequence ID" value="NC_008781.1"/>
</dbReference>
<dbReference type="SMR" id="A1VLZ3"/>
<dbReference type="STRING" id="365044.Pnap_1356"/>
<dbReference type="KEGG" id="pna:Pnap_1356"/>
<dbReference type="eggNOG" id="COG1968">
    <property type="taxonomic scope" value="Bacteria"/>
</dbReference>
<dbReference type="HOGENOM" id="CLU_060296_2_0_4"/>
<dbReference type="OrthoDB" id="9808289at2"/>
<dbReference type="Proteomes" id="UP000000644">
    <property type="component" value="Chromosome"/>
</dbReference>
<dbReference type="GO" id="GO:0005886">
    <property type="term" value="C:plasma membrane"/>
    <property type="evidence" value="ECO:0007669"/>
    <property type="project" value="UniProtKB-SubCell"/>
</dbReference>
<dbReference type="GO" id="GO:0050380">
    <property type="term" value="F:undecaprenyl-diphosphatase activity"/>
    <property type="evidence" value="ECO:0007669"/>
    <property type="project" value="UniProtKB-UniRule"/>
</dbReference>
<dbReference type="GO" id="GO:0071555">
    <property type="term" value="P:cell wall organization"/>
    <property type="evidence" value="ECO:0007669"/>
    <property type="project" value="UniProtKB-KW"/>
</dbReference>
<dbReference type="GO" id="GO:0009252">
    <property type="term" value="P:peptidoglycan biosynthetic process"/>
    <property type="evidence" value="ECO:0007669"/>
    <property type="project" value="UniProtKB-KW"/>
</dbReference>
<dbReference type="GO" id="GO:0008360">
    <property type="term" value="P:regulation of cell shape"/>
    <property type="evidence" value="ECO:0007669"/>
    <property type="project" value="UniProtKB-KW"/>
</dbReference>
<dbReference type="GO" id="GO:0046677">
    <property type="term" value="P:response to antibiotic"/>
    <property type="evidence" value="ECO:0007669"/>
    <property type="project" value="UniProtKB-UniRule"/>
</dbReference>
<dbReference type="HAMAP" id="MF_01006">
    <property type="entry name" value="Undec_diphosphatase"/>
    <property type="match status" value="1"/>
</dbReference>
<dbReference type="InterPro" id="IPR003824">
    <property type="entry name" value="UppP"/>
</dbReference>
<dbReference type="NCBIfam" id="NF001389">
    <property type="entry name" value="PRK00281.1-2"/>
    <property type="match status" value="1"/>
</dbReference>
<dbReference type="NCBIfam" id="NF001390">
    <property type="entry name" value="PRK00281.1-4"/>
    <property type="match status" value="1"/>
</dbReference>
<dbReference type="NCBIfam" id="TIGR00753">
    <property type="entry name" value="undec_PP_bacA"/>
    <property type="match status" value="1"/>
</dbReference>
<dbReference type="PANTHER" id="PTHR30622">
    <property type="entry name" value="UNDECAPRENYL-DIPHOSPHATASE"/>
    <property type="match status" value="1"/>
</dbReference>
<dbReference type="PANTHER" id="PTHR30622:SF3">
    <property type="entry name" value="UNDECAPRENYL-DIPHOSPHATASE"/>
    <property type="match status" value="1"/>
</dbReference>
<dbReference type="Pfam" id="PF02673">
    <property type="entry name" value="BacA"/>
    <property type="match status" value="1"/>
</dbReference>
<gene>
    <name evidence="1" type="primary">uppP</name>
    <name type="ordered locus">Pnap_1356</name>
</gene>
<name>UPPP_POLNA</name>
<proteinExistence type="inferred from homology"/>
<keyword id="KW-0046">Antibiotic resistance</keyword>
<keyword id="KW-0997">Cell inner membrane</keyword>
<keyword id="KW-1003">Cell membrane</keyword>
<keyword id="KW-0133">Cell shape</keyword>
<keyword id="KW-0961">Cell wall biogenesis/degradation</keyword>
<keyword id="KW-0378">Hydrolase</keyword>
<keyword id="KW-0472">Membrane</keyword>
<keyword id="KW-0573">Peptidoglycan synthesis</keyword>
<keyword id="KW-1185">Reference proteome</keyword>
<keyword id="KW-0812">Transmembrane</keyword>
<keyword id="KW-1133">Transmembrane helix</keyword>
<comment type="function">
    <text evidence="1">Catalyzes the dephosphorylation of undecaprenyl diphosphate (UPP). Confers resistance to bacitracin.</text>
</comment>
<comment type="catalytic activity">
    <reaction evidence="1">
        <text>di-trans,octa-cis-undecaprenyl diphosphate + H2O = di-trans,octa-cis-undecaprenyl phosphate + phosphate + H(+)</text>
        <dbReference type="Rhea" id="RHEA:28094"/>
        <dbReference type="ChEBI" id="CHEBI:15377"/>
        <dbReference type="ChEBI" id="CHEBI:15378"/>
        <dbReference type="ChEBI" id="CHEBI:43474"/>
        <dbReference type="ChEBI" id="CHEBI:58405"/>
        <dbReference type="ChEBI" id="CHEBI:60392"/>
        <dbReference type="EC" id="3.6.1.27"/>
    </reaction>
</comment>
<comment type="subcellular location">
    <subcellularLocation>
        <location evidence="1">Cell inner membrane</location>
        <topology evidence="1">Multi-pass membrane protein</topology>
    </subcellularLocation>
</comment>
<comment type="miscellaneous">
    <text>Bacitracin is thought to be involved in the inhibition of peptidoglycan synthesis by sequestering undecaprenyl diphosphate, thereby reducing the pool of lipid carrier available.</text>
</comment>
<comment type="similarity">
    <text evidence="1">Belongs to the UppP family.</text>
</comment>